<gene>
    <name type="primary">TfIIA-L</name>
    <name type="ORF">CG5930</name>
</gene>
<comment type="function">
    <text>TFIIA is a component of the transcription machinery of RNA polymerase II and plays an important role in transcriptional activation. TFIIA in a complex with TBP mediates transcriptional activity.</text>
</comment>
<comment type="subunit">
    <text evidence="3">Belongs to the TFIID complex which is composed of TATA binding protein (Tbp) and a number of TBP-associated factors (Tafs). TFIIA is a heterodimer of a unprocessed large subunit 1 and a small subunit gamma. It was originally believed to be a heterotrimer of an alpha (p30), a beta (p20) and a gamma subunit (p14). Interacts with Tbp. Taf4 interacts with TFIIA-L when TFIIA-L is in complex with Tbp.</text>
</comment>
<comment type="interaction">
    <interactant intactId="EBI-132413">
        <id>P52654</id>
    </interactant>
    <interactant intactId="EBI-123680">
        <id>P52656</id>
        <label>TfIIA-S</label>
    </interactant>
    <organismsDiffer>false</organismsDiffer>
    <experiments>4</experiments>
</comment>
<comment type="interaction">
    <interactant intactId="EBI-132413">
        <id>P52654</id>
    </interactant>
    <interactant intactId="EBI-181168">
        <id>Q9W5B9</id>
        <label>TfIIA-S-2</label>
    </interactant>
    <organismsDiffer>false</organismsDiffer>
    <experiments>5</experiments>
</comment>
<comment type="subcellular location">
    <subcellularLocation>
        <location>Nucleus</location>
    </subcellularLocation>
</comment>
<comment type="alternative products">
    <event type="alternative splicing"/>
    <isoform>
        <id>P52654-1</id>
        <name>A</name>
        <sequence type="displayed"/>
    </isoform>
    <isoform>
        <id>P52654-2</id>
        <name>B</name>
        <sequence type="described" ref="VSP_014785"/>
    </isoform>
    <isoform>
        <id>P52654-3</id>
        <name>C</name>
        <sequence type="described" ref="VSP_014784 VSP_014785"/>
    </isoform>
</comment>
<comment type="PTM">
    <text evidence="3">The precursor form (48 kDa) is cleaved to give rise to the alpha (30 kDa) and beta (20 kDa) subunits.</text>
</comment>
<comment type="similarity">
    <text evidence="4">Belongs to the TFIIA subunit 1 family.</text>
</comment>
<accession>P52654</accession>
<accession>Q8IMN7</accession>
<accession>Q8IMN8</accession>
<accession>Q95RK0</accession>
<accession>Q9VB56</accession>
<reference key="1">
    <citation type="journal article" date="1993" name="Genes Dev.">
        <title>Drosophila TFIIA-L is processed into two subunits that are associated with the TBP/TAF complex.</title>
        <authorList>
            <person name="Yokomori K."/>
            <person name="Admon A."/>
            <person name="Goodrich J.A."/>
            <person name="Chen J.-L."/>
            <person name="Tjian R."/>
        </authorList>
    </citation>
    <scope>NUCLEOTIDE SEQUENCE [MRNA] (ISOFORM A)</scope>
    <scope>PARTIAL PROTEIN SEQUENCE</scope>
    <scope>INTERACTION WITH TBP AND TAF4</scope>
    <scope>CLEAVAGE</scope>
    <source>
        <tissue>Embryo</tissue>
    </source>
</reference>
<reference key="2">
    <citation type="journal article" date="2000" name="Science">
        <title>The genome sequence of Drosophila melanogaster.</title>
        <authorList>
            <person name="Adams M.D."/>
            <person name="Celniker S.E."/>
            <person name="Holt R.A."/>
            <person name="Evans C.A."/>
            <person name="Gocayne J.D."/>
            <person name="Amanatides P.G."/>
            <person name="Scherer S.E."/>
            <person name="Li P.W."/>
            <person name="Hoskins R.A."/>
            <person name="Galle R.F."/>
            <person name="George R.A."/>
            <person name="Lewis S.E."/>
            <person name="Richards S."/>
            <person name="Ashburner M."/>
            <person name="Henderson S.N."/>
            <person name="Sutton G.G."/>
            <person name="Wortman J.R."/>
            <person name="Yandell M.D."/>
            <person name="Zhang Q."/>
            <person name="Chen L.X."/>
            <person name="Brandon R.C."/>
            <person name="Rogers Y.-H.C."/>
            <person name="Blazej R.G."/>
            <person name="Champe M."/>
            <person name="Pfeiffer B.D."/>
            <person name="Wan K.H."/>
            <person name="Doyle C."/>
            <person name="Baxter E.G."/>
            <person name="Helt G."/>
            <person name="Nelson C.R."/>
            <person name="Miklos G.L.G."/>
            <person name="Abril J.F."/>
            <person name="Agbayani A."/>
            <person name="An H.-J."/>
            <person name="Andrews-Pfannkoch C."/>
            <person name="Baldwin D."/>
            <person name="Ballew R.M."/>
            <person name="Basu A."/>
            <person name="Baxendale J."/>
            <person name="Bayraktaroglu L."/>
            <person name="Beasley E.M."/>
            <person name="Beeson K.Y."/>
            <person name="Benos P.V."/>
            <person name="Berman B.P."/>
            <person name="Bhandari D."/>
            <person name="Bolshakov S."/>
            <person name="Borkova D."/>
            <person name="Botchan M.R."/>
            <person name="Bouck J."/>
            <person name="Brokstein P."/>
            <person name="Brottier P."/>
            <person name="Burtis K.C."/>
            <person name="Busam D.A."/>
            <person name="Butler H."/>
            <person name="Cadieu E."/>
            <person name="Center A."/>
            <person name="Chandra I."/>
            <person name="Cherry J.M."/>
            <person name="Cawley S."/>
            <person name="Dahlke C."/>
            <person name="Davenport L.B."/>
            <person name="Davies P."/>
            <person name="de Pablos B."/>
            <person name="Delcher A."/>
            <person name="Deng Z."/>
            <person name="Mays A.D."/>
            <person name="Dew I."/>
            <person name="Dietz S.M."/>
            <person name="Dodson K."/>
            <person name="Doup L.E."/>
            <person name="Downes M."/>
            <person name="Dugan-Rocha S."/>
            <person name="Dunkov B.C."/>
            <person name="Dunn P."/>
            <person name="Durbin K.J."/>
            <person name="Evangelista C.C."/>
            <person name="Ferraz C."/>
            <person name="Ferriera S."/>
            <person name="Fleischmann W."/>
            <person name="Fosler C."/>
            <person name="Gabrielian A.E."/>
            <person name="Garg N.S."/>
            <person name="Gelbart W.M."/>
            <person name="Glasser K."/>
            <person name="Glodek A."/>
            <person name="Gong F."/>
            <person name="Gorrell J.H."/>
            <person name="Gu Z."/>
            <person name="Guan P."/>
            <person name="Harris M."/>
            <person name="Harris N.L."/>
            <person name="Harvey D.A."/>
            <person name="Heiman T.J."/>
            <person name="Hernandez J.R."/>
            <person name="Houck J."/>
            <person name="Hostin D."/>
            <person name="Houston K.A."/>
            <person name="Howland T.J."/>
            <person name="Wei M.-H."/>
            <person name="Ibegwam C."/>
            <person name="Jalali M."/>
            <person name="Kalush F."/>
            <person name="Karpen G.H."/>
            <person name="Ke Z."/>
            <person name="Kennison J.A."/>
            <person name="Ketchum K.A."/>
            <person name="Kimmel B.E."/>
            <person name="Kodira C.D."/>
            <person name="Kraft C.L."/>
            <person name="Kravitz S."/>
            <person name="Kulp D."/>
            <person name="Lai Z."/>
            <person name="Lasko P."/>
            <person name="Lei Y."/>
            <person name="Levitsky A.A."/>
            <person name="Li J.H."/>
            <person name="Li Z."/>
            <person name="Liang Y."/>
            <person name="Lin X."/>
            <person name="Liu X."/>
            <person name="Mattei B."/>
            <person name="McIntosh T.C."/>
            <person name="McLeod M.P."/>
            <person name="McPherson D."/>
            <person name="Merkulov G."/>
            <person name="Milshina N.V."/>
            <person name="Mobarry C."/>
            <person name="Morris J."/>
            <person name="Moshrefi A."/>
            <person name="Mount S.M."/>
            <person name="Moy M."/>
            <person name="Murphy B."/>
            <person name="Murphy L."/>
            <person name="Muzny D.M."/>
            <person name="Nelson D.L."/>
            <person name="Nelson D.R."/>
            <person name="Nelson K.A."/>
            <person name="Nixon K."/>
            <person name="Nusskern D.R."/>
            <person name="Pacleb J.M."/>
            <person name="Palazzolo M."/>
            <person name="Pittman G.S."/>
            <person name="Pan S."/>
            <person name="Pollard J."/>
            <person name="Puri V."/>
            <person name="Reese M.G."/>
            <person name="Reinert K."/>
            <person name="Remington K."/>
            <person name="Saunders R.D.C."/>
            <person name="Scheeler F."/>
            <person name="Shen H."/>
            <person name="Shue B.C."/>
            <person name="Siden-Kiamos I."/>
            <person name="Simpson M."/>
            <person name="Skupski M.P."/>
            <person name="Smith T.J."/>
            <person name="Spier E."/>
            <person name="Spradling A.C."/>
            <person name="Stapleton M."/>
            <person name="Strong R."/>
            <person name="Sun E."/>
            <person name="Svirskas R."/>
            <person name="Tector C."/>
            <person name="Turner R."/>
            <person name="Venter E."/>
            <person name="Wang A.H."/>
            <person name="Wang X."/>
            <person name="Wang Z.-Y."/>
            <person name="Wassarman D.A."/>
            <person name="Weinstock G.M."/>
            <person name="Weissenbach J."/>
            <person name="Williams S.M."/>
            <person name="Woodage T."/>
            <person name="Worley K.C."/>
            <person name="Wu D."/>
            <person name="Yang S."/>
            <person name="Yao Q.A."/>
            <person name="Ye J."/>
            <person name="Yeh R.-F."/>
            <person name="Zaveri J.S."/>
            <person name="Zhan M."/>
            <person name="Zhang G."/>
            <person name="Zhao Q."/>
            <person name="Zheng L."/>
            <person name="Zheng X.H."/>
            <person name="Zhong F.N."/>
            <person name="Zhong W."/>
            <person name="Zhou X."/>
            <person name="Zhu S.C."/>
            <person name="Zhu X."/>
            <person name="Smith H.O."/>
            <person name="Gibbs R.A."/>
            <person name="Myers E.W."/>
            <person name="Rubin G.M."/>
            <person name="Venter J.C."/>
        </authorList>
    </citation>
    <scope>NUCLEOTIDE SEQUENCE [LARGE SCALE GENOMIC DNA]</scope>
    <source>
        <strain>Berkeley</strain>
    </source>
</reference>
<reference key="3">
    <citation type="journal article" date="2002" name="Genome Biol.">
        <title>Annotation of the Drosophila melanogaster euchromatic genome: a systematic review.</title>
        <authorList>
            <person name="Misra S."/>
            <person name="Crosby M.A."/>
            <person name="Mungall C.J."/>
            <person name="Matthews B.B."/>
            <person name="Campbell K.S."/>
            <person name="Hradecky P."/>
            <person name="Huang Y."/>
            <person name="Kaminker J.S."/>
            <person name="Millburn G.H."/>
            <person name="Prochnik S.E."/>
            <person name="Smith C.D."/>
            <person name="Tupy J.L."/>
            <person name="Whitfield E.J."/>
            <person name="Bayraktaroglu L."/>
            <person name="Berman B.P."/>
            <person name="Bettencourt B.R."/>
            <person name="Celniker S.E."/>
            <person name="de Grey A.D.N.J."/>
            <person name="Drysdale R.A."/>
            <person name="Harris N.L."/>
            <person name="Richter J."/>
            <person name="Russo S."/>
            <person name="Schroeder A.J."/>
            <person name="Shu S.Q."/>
            <person name="Stapleton M."/>
            <person name="Yamada C."/>
            <person name="Ashburner M."/>
            <person name="Gelbart W.M."/>
            <person name="Rubin G.M."/>
            <person name="Lewis S.E."/>
        </authorList>
    </citation>
    <scope>GENOME REANNOTATION</scope>
    <scope>ALTERNATIVE SPLICING</scope>
    <source>
        <strain>Berkeley</strain>
    </source>
</reference>
<reference key="4">
    <citation type="journal article" date="2002" name="Genome Biol.">
        <title>A Drosophila full-length cDNA resource.</title>
        <authorList>
            <person name="Stapleton M."/>
            <person name="Carlson J.W."/>
            <person name="Brokstein P."/>
            <person name="Yu C."/>
            <person name="Champe M."/>
            <person name="George R.A."/>
            <person name="Guarin H."/>
            <person name="Kronmiller B."/>
            <person name="Pacleb J.M."/>
            <person name="Park S."/>
            <person name="Wan K.H."/>
            <person name="Rubin G.M."/>
            <person name="Celniker S.E."/>
        </authorList>
    </citation>
    <scope>NUCLEOTIDE SEQUENCE [LARGE SCALE MRNA]</scope>
    <source>
        <strain>Berkeley</strain>
        <tissue>Embryo</tissue>
    </source>
</reference>
<name>TF2AA_DROME</name>
<organism>
    <name type="scientific">Drosophila melanogaster</name>
    <name type="common">Fruit fly</name>
    <dbReference type="NCBI Taxonomy" id="7227"/>
    <lineage>
        <taxon>Eukaryota</taxon>
        <taxon>Metazoa</taxon>
        <taxon>Ecdysozoa</taxon>
        <taxon>Arthropoda</taxon>
        <taxon>Hexapoda</taxon>
        <taxon>Insecta</taxon>
        <taxon>Pterygota</taxon>
        <taxon>Neoptera</taxon>
        <taxon>Endopterygota</taxon>
        <taxon>Diptera</taxon>
        <taxon>Brachycera</taxon>
        <taxon>Muscomorpha</taxon>
        <taxon>Ephydroidea</taxon>
        <taxon>Drosophilidae</taxon>
        <taxon>Drosophila</taxon>
        <taxon>Sophophora</taxon>
    </lineage>
</organism>
<proteinExistence type="evidence at protein level"/>
<dbReference type="EMBL" id="S66759">
    <property type="protein sequence ID" value="AAB28821.1"/>
    <property type="molecule type" value="mRNA"/>
</dbReference>
<dbReference type="EMBL" id="AE014297">
    <property type="protein sequence ID" value="AAF56687.2"/>
    <property type="molecule type" value="Genomic_DNA"/>
</dbReference>
<dbReference type="EMBL" id="AE014297">
    <property type="protein sequence ID" value="AAN14105.1"/>
    <property type="molecule type" value="Genomic_DNA"/>
</dbReference>
<dbReference type="EMBL" id="AE014297">
    <property type="protein sequence ID" value="AAN14106.1"/>
    <property type="molecule type" value="Genomic_DNA"/>
</dbReference>
<dbReference type="EMBL" id="AY061325">
    <property type="protein sequence ID" value="AAL28873.1"/>
    <property type="molecule type" value="mRNA"/>
</dbReference>
<dbReference type="PIR" id="A49076">
    <property type="entry name" value="A49076"/>
</dbReference>
<dbReference type="RefSeq" id="NP_476995.1">
    <molecule id="P52654-1"/>
    <property type="nucleotide sequence ID" value="NM_057647.4"/>
</dbReference>
<dbReference type="RefSeq" id="NP_476996.1">
    <molecule id="P52654-2"/>
    <property type="nucleotide sequence ID" value="NM_057648.4"/>
</dbReference>
<dbReference type="RefSeq" id="NP_733208.1">
    <molecule id="P52654-3"/>
    <property type="nucleotide sequence ID" value="NM_170329.2"/>
</dbReference>
<dbReference type="SMR" id="P52654"/>
<dbReference type="BioGRID" id="68171">
    <property type="interactions" value="38"/>
</dbReference>
<dbReference type="ComplexPortal" id="CPX-2248">
    <property type="entry name" value="General transcription factor complex TFIIA, TfIIA-S variant"/>
</dbReference>
<dbReference type="ComplexPortal" id="CPX-2251">
    <property type="entry name" value="General transcription factor complex TFIIA, TfIIA-S-2 variant"/>
</dbReference>
<dbReference type="FunCoup" id="P52654">
    <property type="interactions" value="2453"/>
</dbReference>
<dbReference type="IntAct" id="P52654">
    <property type="interactions" value="18"/>
</dbReference>
<dbReference type="STRING" id="7227.FBpp0084525"/>
<dbReference type="PaxDb" id="7227-FBpp0084525"/>
<dbReference type="DNASU" id="43284"/>
<dbReference type="EnsemblMetazoa" id="FBtr0085154">
    <molecule id="P52654-3"/>
    <property type="protein sequence ID" value="FBpp0084524"/>
    <property type="gene ID" value="FBgn0011289"/>
</dbReference>
<dbReference type="EnsemblMetazoa" id="FBtr0085155">
    <molecule id="P52654-1"/>
    <property type="protein sequence ID" value="FBpp0084525"/>
    <property type="gene ID" value="FBgn0011289"/>
</dbReference>
<dbReference type="EnsemblMetazoa" id="FBtr0085156">
    <molecule id="P52654-2"/>
    <property type="protein sequence ID" value="FBpp0084526"/>
    <property type="gene ID" value="FBgn0011289"/>
</dbReference>
<dbReference type="GeneID" id="43284"/>
<dbReference type="KEGG" id="dme:Dmel_CG5930"/>
<dbReference type="AGR" id="FB:FBgn0011289"/>
<dbReference type="CTD" id="43284"/>
<dbReference type="FlyBase" id="FBgn0011289">
    <property type="gene designation" value="TfIIA-L"/>
</dbReference>
<dbReference type="VEuPathDB" id="VectorBase:FBgn0011289"/>
<dbReference type="eggNOG" id="KOG2652">
    <property type="taxonomic scope" value="Eukaryota"/>
</dbReference>
<dbReference type="GeneTree" id="ENSGT00940000169791"/>
<dbReference type="InParanoid" id="P52654"/>
<dbReference type="OMA" id="EVCDASQ"/>
<dbReference type="OrthoDB" id="6275927at2759"/>
<dbReference type="PhylomeDB" id="P52654"/>
<dbReference type="Reactome" id="R-DME-674695">
    <property type="pathway name" value="RNA Polymerase II Pre-transcription Events"/>
</dbReference>
<dbReference type="Reactome" id="R-DME-6807505">
    <property type="pathway name" value="RNA polymerase II transcribes snRNA genes"/>
</dbReference>
<dbReference type="Reactome" id="R-DME-73776">
    <property type="pathway name" value="RNA Polymerase II Promoter Escape"/>
</dbReference>
<dbReference type="Reactome" id="R-DME-73779">
    <property type="pathway name" value="RNA Polymerase II Transcription Pre-Initiation And Promoter Opening"/>
</dbReference>
<dbReference type="Reactome" id="R-DME-75953">
    <property type="pathway name" value="RNA Polymerase II Transcription Initiation"/>
</dbReference>
<dbReference type="Reactome" id="R-DME-76042">
    <property type="pathway name" value="RNA Polymerase II Transcription Initiation And Promoter Clearance"/>
</dbReference>
<dbReference type="Reactome" id="R-DME-9018519">
    <property type="pathway name" value="Estrogen-dependent gene expression"/>
</dbReference>
<dbReference type="BioGRID-ORCS" id="43284">
    <property type="hits" value="0 hits in 3 CRISPR screens"/>
</dbReference>
<dbReference type="ChiTaRS" id="TfIIA-L">
    <property type="organism name" value="fly"/>
</dbReference>
<dbReference type="GenomeRNAi" id="43284"/>
<dbReference type="PRO" id="PR:P52654"/>
<dbReference type="Proteomes" id="UP000000803">
    <property type="component" value="Chromosome 3R"/>
</dbReference>
<dbReference type="Bgee" id="FBgn0011289">
    <property type="expression patterns" value="Expressed in embryonic/larval hemocyte (Drosophila) and 207 other cell types or tissues"/>
</dbReference>
<dbReference type="ExpressionAtlas" id="P52654">
    <property type="expression patterns" value="baseline and differential"/>
</dbReference>
<dbReference type="GO" id="GO:0005634">
    <property type="term" value="C:nucleus"/>
    <property type="evidence" value="ECO:0000314"/>
    <property type="project" value="FlyBase"/>
</dbReference>
<dbReference type="GO" id="GO:0005672">
    <property type="term" value="C:transcription factor TFIIA complex"/>
    <property type="evidence" value="ECO:0000314"/>
    <property type="project" value="FlyBase"/>
</dbReference>
<dbReference type="GO" id="GO:0017025">
    <property type="term" value="F:TBP-class protein binding"/>
    <property type="evidence" value="ECO:0000353"/>
    <property type="project" value="FlyBase"/>
</dbReference>
<dbReference type="GO" id="GO:0001094">
    <property type="term" value="F:TFIID-class transcription factor complex binding"/>
    <property type="evidence" value="ECO:0000353"/>
    <property type="project" value="FlyBase"/>
</dbReference>
<dbReference type="GO" id="GO:0006366">
    <property type="term" value="P:transcription by RNA polymerase II"/>
    <property type="evidence" value="ECO:0000314"/>
    <property type="project" value="FlyBase"/>
</dbReference>
<dbReference type="GO" id="GO:0006367">
    <property type="term" value="P:transcription initiation at RNA polymerase II promoter"/>
    <property type="evidence" value="ECO:0000250"/>
    <property type="project" value="FlyBase"/>
</dbReference>
<dbReference type="CDD" id="cd07976">
    <property type="entry name" value="TFIIA_alpha_beta_like"/>
    <property type="match status" value="2"/>
</dbReference>
<dbReference type="FunFam" id="1.10.287.100:FF:000001">
    <property type="entry name" value="Transcription initiation factor IIA subunit"/>
    <property type="match status" value="1"/>
</dbReference>
<dbReference type="FunFam" id="2.30.18.10:FF:000002">
    <property type="entry name" value="Transcription initiation factor IIA subunit 1"/>
    <property type="match status" value="1"/>
</dbReference>
<dbReference type="Gene3D" id="1.10.287.100">
    <property type="match status" value="1"/>
</dbReference>
<dbReference type="Gene3D" id="2.30.18.10">
    <property type="entry name" value="Transcription factor IIA (TFIIA), beta-barrel domain"/>
    <property type="match status" value="1"/>
</dbReference>
<dbReference type="InterPro" id="IPR004855">
    <property type="entry name" value="TFIIA_asu/bsu"/>
</dbReference>
<dbReference type="InterPro" id="IPR009088">
    <property type="entry name" value="TFIIA_b-brl"/>
</dbReference>
<dbReference type="PANTHER" id="PTHR12694">
    <property type="entry name" value="TRANSCRIPTION INITIATION FACTOR IIA SUBUNIT 1"/>
    <property type="match status" value="1"/>
</dbReference>
<dbReference type="PANTHER" id="PTHR12694:SF8">
    <property type="entry name" value="TRANSCRIPTION INITIATION FACTOR IIA SUBUNIT 1"/>
    <property type="match status" value="1"/>
</dbReference>
<dbReference type="Pfam" id="PF03153">
    <property type="entry name" value="TFIIA"/>
    <property type="match status" value="2"/>
</dbReference>
<dbReference type="SMART" id="SM01371">
    <property type="entry name" value="TFIIA"/>
    <property type="match status" value="1"/>
</dbReference>
<dbReference type="SUPFAM" id="SSF47396">
    <property type="entry name" value="Transcription factor IIA (TFIIA), alpha-helical domain"/>
    <property type="match status" value="1"/>
</dbReference>
<dbReference type="SUPFAM" id="SSF50784">
    <property type="entry name" value="Transcription factor IIA (TFIIA), beta-barrel domain"/>
    <property type="match status" value="1"/>
</dbReference>
<protein>
    <recommendedName>
        <fullName>Transcription initiation factor IIA subunit 1</fullName>
    </recommendedName>
    <alternativeName>
        <fullName>General transcription factor IIA subunit 1</fullName>
    </alternativeName>
    <alternativeName>
        <fullName>dTFIIA-L</fullName>
    </alternativeName>
    <component>
        <recommendedName>
            <fullName>Transcription initiation factor IIA alpha chain</fullName>
        </recommendedName>
        <alternativeName>
            <fullName>TFIIA p30 subunit</fullName>
        </alternativeName>
    </component>
    <component>
        <recommendedName>
            <fullName>Transcription initiation factor IIA beta chain</fullName>
        </recommendedName>
        <alternativeName>
            <fullName>TFIIA p20 subunit</fullName>
        </alternativeName>
    </component>
</protein>
<evidence type="ECO:0000250" key="1"/>
<evidence type="ECO:0000256" key="2">
    <source>
        <dbReference type="SAM" id="MobiDB-lite"/>
    </source>
</evidence>
<evidence type="ECO:0000269" key="3">
    <source>
    </source>
</evidence>
<evidence type="ECO:0000305" key="4"/>
<sequence length="366" mass="39268">MALCQTSVLKVYHAVIEDVITNVRDAFLDEGVDEQVLQEMKQVWRNKLLASKAVELSPDSGDGSHPPPIVANNPKSHKAANAKAKKAAAATAVTSHQHIGGNSSMSSLVGLKSSAGMAAGSGIRNGLVPIKQEVNSQNPPPLHPTSAASMMQKQQQAASSGQGSIPIVATLDPNRIMPVNITLPSPAGSASSESRVLTIQVPASALQENQLTQILTAHLISSIMSLPTTLASSVLQQHVNAALSSANHQKTLAAAKQLDGALDSSDEDESEESDDNIDNDDDDDLDKDDDEDAEHEDAAEEEPLNSEDDVTDEDSAEMFDTDNVIVCQYDKITRSRNKWKFYLKDGIMNMRGKDYVFQKSNGDAEW</sequence>
<feature type="chain" id="PRO_0000042590" description="Transcription initiation factor IIA subunit 1">
    <location>
        <begin position="1"/>
        <end position="366"/>
    </location>
</feature>
<feature type="chain" id="PRO_0000042591" description="Transcription initiation factor IIA alpha chain">
    <location>
        <begin position="1"/>
        <end position="262"/>
    </location>
</feature>
<feature type="chain" id="PRO_0000042592" description="Transcription initiation factor IIA beta chain">
    <location>
        <begin position="263"/>
        <end position="366"/>
    </location>
</feature>
<feature type="region of interest" description="Disordered" evidence="2">
    <location>
        <begin position="56"/>
        <end position="82"/>
    </location>
</feature>
<feature type="region of interest" description="Disordered" evidence="2">
    <location>
        <begin position="133"/>
        <end position="162"/>
    </location>
</feature>
<feature type="region of interest" description="Disordered" evidence="2">
    <location>
        <begin position="257"/>
        <end position="317"/>
    </location>
</feature>
<feature type="compositionally biased region" description="Low complexity" evidence="2">
    <location>
        <begin position="146"/>
        <end position="162"/>
    </location>
</feature>
<feature type="compositionally biased region" description="Acidic residues" evidence="2">
    <location>
        <begin position="264"/>
        <end position="317"/>
    </location>
</feature>
<feature type="modified residue" description="Phosphoserine; by TAF1" evidence="1">
    <location>
        <position position="265"/>
    </location>
</feature>
<feature type="modified residue" description="Phosphoserine; by TAF1" evidence="1">
    <location>
        <position position="306"/>
    </location>
</feature>
<feature type="splice variant" id="VSP_014784" description="In isoform C." evidence="4">
    <location>
        <begin position="1"/>
        <end position="39"/>
    </location>
</feature>
<feature type="splice variant" id="VSP_014785" description="In isoform B and isoform C." evidence="4">
    <location>
        <begin position="75"/>
        <end position="77"/>
    </location>
</feature>
<feature type="sequence conflict" description="In Ref. 1; AAB28821." evidence="4" ref="1">
    <original>A</original>
    <variation>G</variation>
    <location>
        <position position="26"/>
    </location>
</feature>
<feature type="sequence conflict" description="In Ref. 1; AAB28821." evidence="4" ref="1">
    <original>A</original>
    <variation>G</variation>
    <location>
        <position position="147"/>
    </location>
</feature>
<keyword id="KW-0025">Alternative splicing</keyword>
<keyword id="KW-0903">Direct protein sequencing</keyword>
<keyword id="KW-0539">Nucleus</keyword>
<keyword id="KW-0597">Phosphoprotein</keyword>
<keyword id="KW-1185">Reference proteome</keyword>
<keyword id="KW-0804">Transcription</keyword>
<keyword id="KW-0805">Transcription regulation</keyword>